<accession>A1KTB2</accession>
<reference key="1">
    <citation type="journal article" date="2007" name="PLoS Genet.">
        <title>Meningococcal genetic variation mechanisms viewed through comparative analysis of serogroup C strain FAM18.</title>
        <authorList>
            <person name="Bentley S.D."/>
            <person name="Vernikos G.S."/>
            <person name="Snyder L.A.S."/>
            <person name="Churcher C."/>
            <person name="Arrowsmith C."/>
            <person name="Chillingworth T."/>
            <person name="Cronin A."/>
            <person name="Davis P.H."/>
            <person name="Holroyd N.E."/>
            <person name="Jagels K."/>
            <person name="Maddison M."/>
            <person name="Moule S."/>
            <person name="Rabbinowitsch E."/>
            <person name="Sharp S."/>
            <person name="Unwin L."/>
            <person name="Whitehead S."/>
            <person name="Quail M.A."/>
            <person name="Achtman M."/>
            <person name="Barrell B.G."/>
            <person name="Saunders N.J."/>
            <person name="Parkhill J."/>
        </authorList>
    </citation>
    <scope>NUCLEOTIDE SEQUENCE [LARGE SCALE GENOMIC DNA]</scope>
    <source>
        <strain>ATCC 700532 / DSM 15464 / FAM18</strain>
    </source>
</reference>
<name>PANC_NEIMF</name>
<dbReference type="EC" id="6.3.2.1" evidence="1"/>
<dbReference type="EMBL" id="AM421808">
    <property type="protein sequence ID" value="CAM10095.1"/>
    <property type="molecule type" value="Genomic_DNA"/>
</dbReference>
<dbReference type="RefSeq" id="WP_011798849.1">
    <property type="nucleotide sequence ID" value="NC_008767.1"/>
</dbReference>
<dbReference type="SMR" id="A1KTB2"/>
<dbReference type="KEGG" id="nmc:NMC0812"/>
<dbReference type="HOGENOM" id="CLU_047148_0_0_4"/>
<dbReference type="UniPathway" id="UPA00028">
    <property type="reaction ID" value="UER00005"/>
</dbReference>
<dbReference type="Proteomes" id="UP000002286">
    <property type="component" value="Chromosome"/>
</dbReference>
<dbReference type="GO" id="GO:0005829">
    <property type="term" value="C:cytosol"/>
    <property type="evidence" value="ECO:0007669"/>
    <property type="project" value="TreeGrafter"/>
</dbReference>
<dbReference type="GO" id="GO:0005524">
    <property type="term" value="F:ATP binding"/>
    <property type="evidence" value="ECO:0007669"/>
    <property type="project" value="UniProtKB-KW"/>
</dbReference>
<dbReference type="GO" id="GO:0004592">
    <property type="term" value="F:pantoate-beta-alanine ligase activity"/>
    <property type="evidence" value="ECO:0007669"/>
    <property type="project" value="UniProtKB-UniRule"/>
</dbReference>
<dbReference type="GO" id="GO:0015940">
    <property type="term" value="P:pantothenate biosynthetic process"/>
    <property type="evidence" value="ECO:0007669"/>
    <property type="project" value="UniProtKB-UniRule"/>
</dbReference>
<dbReference type="CDD" id="cd00560">
    <property type="entry name" value="PanC"/>
    <property type="match status" value="1"/>
</dbReference>
<dbReference type="FunFam" id="3.30.1300.10:FF:000001">
    <property type="entry name" value="Pantothenate synthetase"/>
    <property type="match status" value="1"/>
</dbReference>
<dbReference type="FunFam" id="3.40.50.620:FF:000013">
    <property type="entry name" value="Pantothenate synthetase"/>
    <property type="match status" value="1"/>
</dbReference>
<dbReference type="Gene3D" id="3.40.50.620">
    <property type="entry name" value="HUPs"/>
    <property type="match status" value="1"/>
</dbReference>
<dbReference type="Gene3D" id="3.30.1300.10">
    <property type="entry name" value="Pantoate-beta-alanine ligase, C-terminal domain"/>
    <property type="match status" value="1"/>
</dbReference>
<dbReference type="HAMAP" id="MF_00158">
    <property type="entry name" value="PanC"/>
    <property type="match status" value="1"/>
</dbReference>
<dbReference type="InterPro" id="IPR004821">
    <property type="entry name" value="Cyt_trans-like"/>
</dbReference>
<dbReference type="InterPro" id="IPR003721">
    <property type="entry name" value="Pantoate_ligase"/>
</dbReference>
<dbReference type="InterPro" id="IPR042176">
    <property type="entry name" value="Pantoate_ligase_C"/>
</dbReference>
<dbReference type="InterPro" id="IPR014729">
    <property type="entry name" value="Rossmann-like_a/b/a_fold"/>
</dbReference>
<dbReference type="NCBIfam" id="TIGR00125">
    <property type="entry name" value="cyt_tran_rel"/>
    <property type="match status" value="1"/>
</dbReference>
<dbReference type="NCBIfam" id="TIGR00018">
    <property type="entry name" value="panC"/>
    <property type="match status" value="1"/>
</dbReference>
<dbReference type="PANTHER" id="PTHR21299">
    <property type="entry name" value="CYTIDYLATE KINASE/PANTOATE-BETA-ALANINE LIGASE"/>
    <property type="match status" value="1"/>
</dbReference>
<dbReference type="PANTHER" id="PTHR21299:SF1">
    <property type="entry name" value="PANTOATE--BETA-ALANINE LIGASE"/>
    <property type="match status" value="1"/>
</dbReference>
<dbReference type="Pfam" id="PF02569">
    <property type="entry name" value="Pantoate_ligase"/>
    <property type="match status" value="1"/>
</dbReference>
<dbReference type="SUPFAM" id="SSF52374">
    <property type="entry name" value="Nucleotidylyl transferase"/>
    <property type="match status" value="1"/>
</dbReference>
<proteinExistence type="inferred from homology"/>
<sequence>MQIIHTIRELRAWRKNAGKVAFVPTMGNLHEGHLALVREAKKRADNVVVSIFVNRLQFGQGEDFDKYPRTLQQDADKLEAEGVAVVFAPDEKELYPNVEQRYSVEPPNLQNELCGKFRPGHFLGVATVVSKLFNIVAPDVACFGKKDYQQLAVIKGLTEDLNFDVEIVPVDTGRAEDGLALSSRNQYLSAAERDEAPRLYRELKAVAESLAQGSLDYAGLEKRAVQSLTEYGWVVDYVEIRRADTLEVARAGDKKLVVLAAARLGTTRLIDNLEIKLP</sequence>
<organism>
    <name type="scientific">Neisseria meningitidis serogroup C / serotype 2a (strain ATCC 700532 / DSM 15464 / FAM18)</name>
    <dbReference type="NCBI Taxonomy" id="272831"/>
    <lineage>
        <taxon>Bacteria</taxon>
        <taxon>Pseudomonadati</taxon>
        <taxon>Pseudomonadota</taxon>
        <taxon>Betaproteobacteria</taxon>
        <taxon>Neisseriales</taxon>
        <taxon>Neisseriaceae</taxon>
        <taxon>Neisseria</taxon>
    </lineage>
</organism>
<gene>
    <name evidence="1" type="primary">panC</name>
    <name type="ordered locus">NMC0812</name>
</gene>
<keyword id="KW-0067">ATP-binding</keyword>
<keyword id="KW-0963">Cytoplasm</keyword>
<keyword id="KW-0436">Ligase</keyword>
<keyword id="KW-0547">Nucleotide-binding</keyword>
<keyword id="KW-0566">Pantothenate biosynthesis</keyword>
<comment type="function">
    <text evidence="1">Catalyzes the condensation of pantoate with beta-alanine in an ATP-dependent reaction via a pantoyl-adenylate intermediate.</text>
</comment>
<comment type="catalytic activity">
    <reaction evidence="1">
        <text>(R)-pantoate + beta-alanine + ATP = (R)-pantothenate + AMP + diphosphate + H(+)</text>
        <dbReference type="Rhea" id="RHEA:10912"/>
        <dbReference type="ChEBI" id="CHEBI:15378"/>
        <dbReference type="ChEBI" id="CHEBI:15980"/>
        <dbReference type="ChEBI" id="CHEBI:29032"/>
        <dbReference type="ChEBI" id="CHEBI:30616"/>
        <dbReference type="ChEBI" id="CHEBI:33019"/>
        <dbReference type="ChEBI" id="CHEBI:57966"/>
        <dbReference type="ChEBI" id="CHEBI:456215"/>
        <dbReference type="EC" id="6.3.2.1"/>
    </reaction>
</comment>
<comment type="pathway">
    <text evidence="1">Cofactor biosynthesis; (R)-pantothenate biosynthesis; (R)-pantothenate from (R)-pantoate and beta-alanine: step 1/1.</text>
</comment>
<comment type="subunit">
    <text evidence="1">Homodimer.</text>
</comment>
<comment type="subcellular location">
    <subcellularLocation>
        <location evidence="1">Cytoplasm</location>
    </subcellularLocation>
</comment>
<comment type="miscellaneous">
    <text evidence="1">The reaction proceeds by a bi uni uni bi ping pong mechanism.</text>
</comment>
<comment type="similarity">
    <text evidence="1">Belongs to the pantothenate synthetase family.</text>
</comment>
<protein>
    <recommendedName>
        <fullName evidence="1">Pantothenate synthetase</fullName>
        <shortName evidence="1">PS</shortName>
        <ecNumber evidence="1">6.3.2.1</ecNumber>
    </recommendedName>
    <alternativeName>
        <fullName evidence="1">Pantoate--beta-alanine ligase</fullName>
    </alternativeName>
    <alternativeName>
        <fullName evidence="1">Pantoate-activating enzyme</fullName>
    </alternativeName>
</protein>
<feature type="chain" id="PRO_0000305495" description="Pantothenate synthetase">
    <location>
        <begin position="1"/>
        <end position="278"/>
    </location>
</feature>
<feature type="active site" description="Proton donor" evidence="1">
    <location>
        <position position="33"/>
    </location>
</feature>
<feature type="binding site" evidence="1">
    <location>
        <begin position="26"/>
        <end position="33"/>
    </location>
    <ligand>
        <name>ATP</name>
        <dbReference type="ChEBI" id="CHEBI:30616"/>
    </ligand>
</feature>
<feature type="binding site" evidence="1">
    <location>
        <position position="57"/>
    </location>
    <ligand>
        <name>(R)-pantoate</name>
        <dbReference type="ChEBI" id="CHEBI:15980"/>
    </ligand>
</feature>
<feature type="binding site" evidence="1">
    <location>
        <position position="57"/>
    </location>
    <ligand>
        <name>beta-alanine</name>
        <dbReference type="ChEBI" id="CHEBI:57966"/>
    </ligand>
</feature>
<feature type="binding site" evidence="1">
    <location>
        <begin position="144"/>
        <end position="147"/>
    </location>
    <ligand>
        <name>ATP</name>
        <dbReference type="ChEBI" id="CHEBI:30616"/>
    </ligand>
</feature>
<feature type="binding site" evidence="1">
    <location>
        <position position="150"/>
    </location>
    <ligand>
        <name>(R)-pantoate</name>
        <dbReference type="ChEBI" id="CHEBI:15980"/>
    </ligand>
</feature>
<feature type="binding site" evidence="1">
    <location>
        <position position="173"/>
    </location>
    <ligand>
        <name>ATP</name>
        <dbReference type="ChEBI" id="CHEBI:30616"/>
    </ligand>
</feature>
<feature type="binding site" evidence="1">
    <location>
        <begin position="181"/>
        <end position="184"/>
    </location>
    <ligand>
        <name>ATP</name>
        <dbReference type="ChEBI" id="CHEBI:30616"/>
    </ligand>
</feature>
<evidence type="ECO:0000255" key="1">
    <source>
        <dbReference type="HAMAP-Rule" id="MF_00158"/>
    </source>
</evidence>